<keyword id="KW-0687">Ribonucleoprotein</keyword>
<keyword id="KW-0689">Ribosomal protein</keyword>
<keyword id="KW-0694">RNA-binding</keyword>
<keyword id="KW-0699">rRNA-binding</keyword>
<gene>
    <name evidence="1" type="primary">rplX</name>
    <name type="ordered locus">Bpet4939</name>
</gene>
<organism>
    <name type="scientific">Bordetella petrii (strain ATCC BAA-461 / DSM 12804 / CCUG 43448)</name>
    <dbReference type="NCBI Taxonomy" id="340100"/>
    <lineage>
        <taxon>Bacteria</taxon>
        <taxon>Pseudomonadati</taxon>
        <taxon>Pseudomonadota</taxon>
        <taxon>Betaproteobacteria</taxon>
        <taxon>Burkholderiales</taxon>
        <taxon>Alcaligenaceae</taxon>
        <taxon>Bordetella</taxon>
    </lineage>
</organism>
<accession>A9IHU0</accession>
<protein>
    <recommendedName>
        <fullName evidence="1">Large ribosomal subunit protein uL24</fullName>
    </recommendedName>
    <alternativeName>
        <fullName evidence="2">50S ribosomal protein L24</fullName>
    </alternativeName>
</protein>
<evidence type="ECO:0000255" key="1">
    <source>
        <dbReference type="HAMAP-Rule" id="MF_01326"/>
    </source>
</evidence>
<evidence type="ECO:0000305" key="2"/>
<name>RL24_BORPD</name>
<proteinExistence type="inferred from homology"/>
<comment type="function">
    <text evidence="1">One of two assembly initiator proteins, it binds directly to the 5'-end of the 23S rRNA, where it nucleates assembly of the 50S subunit.</text>
</comment>
<comment type="function">
    <text evidence="1">One of the proteins that surrounds the polypeptide exit tunnel on the outside of the subunit.</text>
</comment>
<comment type="subunit">
    <text evidence="1">Part of the 50S ribosomal subunit.</text>
</comment>
<comment type="similarity">
    <text evidence="1">Belongs to the universal ribosomal protein uL24 family.</text>
</comment>
<sequence>MNNIRKGDEVIVLTGRDKKRRGTVLARVDADHVLVEGVNVVKKHVKANPMANNPGGIVEKTLPIHISNVALFNPATGKGDRVGVKEVDGRKVRVFRSNGAVVGAKA</sequence>
<reference key="1">
    <citation type="journal article" date="2008" name="BMC Genomics">
        <title>The missing link: Bordetella petrii is endowed with both the metabolic versatility of environmental bacteria and virulence traits of pathogenic Bordetellae.</title>
        <authorList>
            <person name="Gross R."/>
            <person name="Guzman C.A."/>
            <person name="Sebaihia M."/>
            <person name="Martin dos Santos V.A.P."/>
            <person name="Pieper D.H."/>
            <person name="Koebnik R."/>
            <person name="Lechner M."/>
            <person name="Bartels D."/>
            <person name="Buhrmester J."/>
            <person name="Choudhuri J.V."/>
            <person name="Ebensen T."/>
            <person name="Gaigalat L."/>
            <person name="Herrmann S."/>
            <person name="Khachane A.N."/>
            <person name="Larisch C."/>
            <person name="Link S."/>
            <person name="Linke B."/>
            <person name="Meyer F."/>
            <person name="Mormann S."/>
            <person name="Nakunst D."/>
            <person name="Rueckert C."/>
            <person name="Schneiker-Bekel S."/>
            <person name="Schulze K."/>
            <person name="Voerholter F.-J."/>
            <person name="Yevsa T."/>
            <person name="Engle J.T."/>
            <person name="Goldman W.E."/>
            <person name="Puehler A."/>
            <person name="Goebel U.B."/>
            <person name="Goesmann A."/>
            <person name="Bloecker H."/>
            <person name="Kaiser O."/>
            <person name="Martinez-Arias R."/>
        </authorList>
    </citation>
    <scope>NUCLEOTIDE SEQUENCE [LARGE SCALE GENOMIC DNA]</scope>
    <source>
        <strain>ATCC BAA-461 / DSM 12804 / CCUG 43448</strain>
    </source>
</reference>
<feature type="chain" id="PRO_1000141970" description="Large ribosomal subunit protein uL24">
    <location>
        <begin position="1"/>
        <end position="106"/>
    </location>
</feature>
<dbReference type="EMBL" id="AM902716">
    <property type="protein sequence ID" value="CAP45291.1"/>
    <property type="molecule type" value="Genomic_DNA"/>
</dbReference>
<dbReference type="SMR" id="A9IHU0"/>
<dbReference type="STRING" id="94624.Bpet4939"/>
<dbReference type="KEGG" id="bpt:Bpet4939"/>
<dbReference type="eggNOG" id="COG0198">
    <property type="taxonomic scope" value="Bacteria"/>
</dbReference>
<dbReference type="Proteomes" id="UP000001225">
    <property type="component" value="Chromosome"/>
</dbReference>
<dbReference type="GO" id="GO:1990904">
    <property type="term" value="C:ribonucleoprotein complex"/>
    <property type="evidence" value="ECO:0007669"/>
    <property type="project" value="UniProtKB-KW"/>
</dbReference>
<dbReference type="GO" id="GO:0005840">
    <property type="term" value="C:ribosome"/>
    <property type="evidence" value="ECO:0007669"/>
    <property type="project" value="UniProtKB-KW"/>
</dbReference>
<dbReference type="GO" id="GO:0019843">
    <property type="term" value="F:rRNA binding"/>
    <property type="evidence" value="ECO:0007669"/>
    <property type="project" value="UniProtKB-UniRule"/>
</dbReference>
<dbReference type="GO" id="GO:0003735">
    <property type="term" value="F:structural constituent of ribosome"/>
    <property type="evidence" value="ECO:0007669"/>
    <property type="project" value="InterPro"/>
</dbReference>
<dbReference type="GO" id="GO:0006412">
    <property type="term" value="P:translation"/>
    <property type="evidence" value="ECO:0007669"/>
    <property type="project" value="UniProtKB-UniRule"/>
</dbReference>
<dbReference type="CDD" id="cd06089">
    <property type="entry name" value="KOW_RPL26"/>
    <property type="match status" value="1"/>
</dbReference>
<dbReference type="FunFam" id="2.30.30.30:FF:000004">
    <property type="entry name" value="50S ribosomal protein L24"/>
    <property type="match status" value="1"/>
</dbReference>
<dbReference type="Gene3D" id="2.30.30.30">
    <property type="match status" value="1"/>
</dbReference>
<dbReference type="HAMAP" id="MF_01326_B">
    <property type="entry name" value="Ribosomal_uL24_B"/>
    <property type="match status" value="1"/>
</dbReference>
<dbReference type="InterPro" id="IPR014722">
    <property type="entry name" value="Rib_uL2_dom2"/>
</dbReference>
<dbReference type="InterPro" id="IPR003256">
    <property type="entry name" value="Ribosomal_uL24"/>
</dbReference>
<dbReference type="InterPro" id="IPR005825">
    <property type="entry name" value="Ribosomal_uL24_CS"/>
</dbReference>
<dbReference type="InterPro" id="IPR041988">
    <property type="entry name" value="Ribosomal_uL24_KOW"/>
</dbReference>
<dbReference type="InterPro" id="IPR008991">
    <property type="entry name" value="Translation_prot_SH3-like_sf"/>
</dbReference>
<dbReference type="NCBIfam" id="TIGR01079">
    <property type="entry name" value="rplX_bact"/>
    <property type="match status" value="1"/>
</dbReference>
<dbReference type="PANTHER" id="PTHR12903">
    <property type="entry name" value="MITOCHONDRIAL RIBOSOMAL PROTEIN L24"/>
    <property type="match status" value="1"/>
</dbReference>
<dbReference type="Pfam" id="PF17136">
    <property type="entry name" value="ribosomal_L24"/>
    <property type="match status" value="1"/>
</dbReference>
<dbReference type="SUPFAM" id="SSF50104">
    <property type="entry name" value="Translation proteins SH3-like domain"/>
    <property type="match status" value="1"/>
</dbReference>
<dbReference type="PROSITE" id="PS01108">
    <property type="entry name" value="RIBOSOMAL_L24"/>
    <property type="match status" value="1"/>
</dbReference>